<keyword id="KW-1003">Cell membrane</keyword>
<keyword id="KW-0249">Electron transport</keyword>
<keyword id="KW-0349">Heme</keyword>
<keyword id="KW-0408">Iron</keyword>
<keyword id="KW-1017">Isopeptide bond</keyword>
<keyword id="KW-0472">Membrane</keyword>
<keyword id="KW-0479">Metal-binding</keyword>
<keyword id="KW-0521">NADP</keyword>
<keyword id="KW-0560">Oxidoreductase</keyword>
<keyword id="KW-0597">Phosphoprotein</keyword>
<keyword id="KW-1185">Reference proteome</keyword>
<keyword id="KW-0812">Transmembrane</keyword>
<keyword id="KW-1133">Transmembrane helix</keyword>
<keyword id="KW-0813">Transport</keyword>
<keyword id="KW-0832">Ubl conjugation</keyword>
<sequence length="192" mass="20509">MGQIEWAMWANEQALASGLILITGGIVATAGQFAQWYLGAYSIAAGVLICLLEYPRGKRSKGSTMERCGQKYLTRAVKVFGPLTSNYYIRAFLHLGLSVPAGFLLATILGTACLAIASSIYLLAAIHGEHWTPIETKPKERPQVGGTIKQPPSNPPPRPPAEARKKPSEEEVAGVPGGGPQENPMPVTDEVV</sequence>
<name>CY24A_TURTR</name>
<accession>Q9N2H0</accession>
<organism>
    <name type="scientific">Tursiops truncatus</name>
    <name type="common">Atlantic bottle-nosed dolphin</name>
    <name type="synonym">Delphinus truncatus</name>
    <dbReference type="NCBI Taxonomy" id="9739"/>
    <lineage>
        <taxon>Eukaryota</taxon>
        <taxon>Metazoa</taxon>
        <taxon>Chordata</taxon>
        <taxon>Craniata</taxon>
        <taxon>Vertebrata</taxon>
        <taxon>Euteleostomi</taxon>
        <taxon>Mammalia</taxon>
        <taxon>Eutheria</taxon>
        <taxon>Laurasiatheria</taxon>
        <taxon>Artiodactyla</taxon>
        <taxon>Whippomorpha</taxon>
        <taxon>Cetacea</taxon>
        <taxon>Odontoceti</taxon>
        <taxon>Delphinidae</taxon>
        <taxon>Tursiops</taxon>
    </lineage>
</organism>
<gene>
    <name evidence="1" type="primary">CYBA</name>
</gene>
<proteinExistence type="evidence at transcript level"/>
<feature type="initiator methionine" description="Removed" evidence="1">
    <location>
        <position position="1"/>
    </location>
</feature>
<feature type="chain" id="PRO_0000144912" description="Cytochrome b-245 light chain">
    <location>
        <begin position="2"/>
        <end position="192"/>
    </location>
</feature>
<feature type="topological domain" description="Cytoplasmic" evidence="4">
    <location>
        <begin position="2"/>
        <end position="7"/>
    </location>
</feature>
<feature type="transmembrane region" description="Helical" evidence="1">
    <location>
        <begin position="8"/>
        <end position="30"/>
    </location>
</feature>
<feature type="topological domain" description="Extracellular" evidence="4">
    <location>
        <begin position="31"/>
        <end position="35"/>
    </location>
</feature>
<feature type="transmembrane region" description="Helical" evidence="1">
    <location>
        <begin position="36"/>
        <end position="53"/>
    </location>
</feature>
<feature type="topological domain" description="Cytoplasmic" evidence="4">
    <location>
        <begin position="54"/>
        <end position="69"/>
    </location>
</feature>
<feature type="intramembrane region" evidence="1">
    <location>
        <begin position="70"/>
        <end position="80"/>
    </location>
</feature>
<feature type="topological domain" description="Cytoplasmic" evidence="4">
    <location>
        <begin position="81"/>
        <end position="86"/>
    </location>
</feature>
<feature type="transmembrane region" description="Helical" evidence="1">
    <location>
        <begin position="87"/>
        <end position="104"/>
    </location>
</feature>
<feature type="topological domain" description="Extracellular" evidence="4">
    <location>
        <position position="105"/>
    </location>
</feature>
<feature type="transmembrane region" description="Helical" evidence="1">
    <location>
        <begin position="106"/>
        <end position="126"/>
    </location>
</feature>
<feature type="topological domain" description="Cytoplasmic" evidence="4">
    <location>
        <begin position="127"/>
        <end position="192"/>
    </location>
</feature>
<feature type="region of interest" description="Disordered" evidence="3">
    <location>
        <begin position="134"/>
        <end position="192"/>
    </location>
</feature>
<feature type="modified residue" description="Phosphothreonine" evidence="1">
    <location>
        <position position="147"/>
    </location>
</feature>
<feature type="modified residue" description="Phosphoserine" evidence="2">
    <location>
        <position position="168"/>
    </location>
</feature>
<feature type="cross-link" description="Glycyl lysine isopeptide (Lys-Gly) (interchain with G-Cter in ubiquitin)" evidence="2">
    <location>
        <position position="149"/>
    </location>
</feature>
<protein>
    <recommendedName>
        <fullName evidence="1">Cytochrome b-245 light chain</fullName>
    </recommendedName>
    <alternativeName>
        <fullName>Cytochrome b(558) alpha chain</fullName>
    </alternativeName>
    <alternativeName>
        <fullName>Cytochrome b558 subunit alpha</fullName>
    </alternativeName>
    <alternativeName>
        <fullName>Neutrophil cytochrome b 22 kDa polypeptide</fullName>
    </alternativeName>
    <alternativeName>
        <fullName>Superoxide-generating NADPH oxidase light chain subunit</fullName>
    </alternativeName>
    <alternativeName>
        <fullName>p22 phagocyte B-cytochrome</fullName>
    </alternativeName>
    <alternativeName>
        <fullName>p22-phox</fullName>
        <shortName>p22phox</shortName>
    </alternativeName>
</protein>
<comment type="function">
    <text evidence="1">Subunit of NADPH oxidase complexes that is required for the NADPH oxidase activity that generates, in various cell types, superoxide from molecular oxygen utilizing NADPH as an electron donor. Subunit of the phagocyte NADPH oxidase complex that mediates the transfer of electrons from cytosolic NADPH to O2 to produce the superoxide anion (O2(-)). In the activated complex, electrons are first transferred from NADPH to flavin adenine dinucleotide (FAD) and subsequently transferred via two heme molecules to molecular oxygen, producing superoxide through an outer-sphere reaction. Activation of the NADPH oxidase complex is initiated by the assembly of cytosolic subunits of the NADPH oxidase complex with the core NADPH oxidase complex to form a complex at the plasma membrane or phagosomal membrane. This activation process is initiated by phosphorylation dependent binding of the cytosolic NCF1/p47-phox subunit to the C-terminus of CYBA/p22-phox. Aassociates with NOX3 to form a functional NADPH oxidase constitutively generating superoxide.</text>
</comment>
<comment type="subunit">
    <text evidence="1 2">Component of the phagocyte NADPH oxidase core complex/cytochrome b558 complex, composed of CYBB (heavy chain (beta)) and CYBA (light chain (alpha)). Component of the phagocyte NADPH oxidase complex composed of an obligatory core heterodimer formed by the membrane proteins CYBA and CYBB and the cytosolic regulatory subunits NCF1/p47-phox, NCF2/p67-phox, NCF4/p40-phox and the small GTPase RAC1 or RAC2. Interacts with NCF1 (via SH3 domain) (By similarity). Interacts with SH3PXD2A (By similarity). Interacts with DUOX1, DUOX2 and TPO. Interacts with NOX4; this interaction mediates superoxide generation. Interacts with calprotectin (S100A8/9) (By similarity). Interacts with GBP7 (By similarity). Interacts with NOXO1. Forms a heterodimer with NOX3 and is essential for activity and cell membrane localization of NOX3. Interacts with NOX1 (By similarity).</text>
</comment>
<comment type="subcellular location">
    <subcellularLocation>
        <location evidence="1">Cell membrane</location>
        <topology evidence="1">Multi-pass membrane protein</topology>
    </subcellularLocation>
</comment>
<comment type="PTM">
    <text evidence="1">Phosphorylation at Thr-147 enhances NADPH oxidase activity by promoting NCF1/p47-phox binding.</text>
</comment>
<comment type="PTM">
    <text evidence="2">Ubiquitinated at Lys-149 likely by RNF145.</text>
</comment>
<comment type="similarity">
    <text evidence="4">Belongs to the p22phox family.</text>
</comment>
<dbReference type="EMBL" id="AB034193">
    <property type="protein sequence ID" value="BAA95155.1"/>
    <property type="molecule type" value="mRNA"/>
</dbReference>
<dbReference type="RefSeq" id="NP_001267539.1">
    <property type="nucleotide sequence ID" value="NM_001280610.1"/>
</dbReference>
<dbReference type="SMR" id="Q9N2H0"/>
<dbReference type="FunCoup" id="Q9N2H0">
    <property type="interactions" value="555"/>
</dbReference>
<dbReference type="STRING" id="9739.ENSTTRP00000005912"/>
<dbReference type="GeneID" id="101328418"/>
<dbReference type="HOGENOM" id="CLU_125024_0_0_1"/>
<dbReference type="InParanoid" id="Q9N2H0"/>
<dbReference type="OMA" id="ARTGQYC"/>
<dbReference type="OrthoDB" id="2445232at2759"/>
<dbReference type="TreeFam" id="TF328901"/>
<dbReference type="Proteomes" id="UP000245320">
    <property type="component" value="Chromosome 19"/>
</dbReference>
<dbReference type="GO" id="GO:0005768">
    <property type="term" value="C:endosome"/>
    <property type="evidence" value="ECO:0007669"/>
    <property type="project" value="Ensembl"/>
</dbReference>
<dbReference type="GO" id="GO:0043020">
    <property type="term" value="C:NADPH oxidase complex"/>
    <property type="evidence" value="ECO:0000250"/>
    <property type="project" value="UniProtKB"/>
</dbReference>
<dbReference type="GO" id="GO:0005886">
    <property type="term" value="C:plasma membrane"/>
    <property type="evidence" value="ECO:0000250"/>
    <property type="project" value="UniProtKB"/>
</dbReference>
<dbReference type="GO" id="GO:0009055">
    <property type="term" value="F:electron transfer activity"/>
    <property type="evidence" value="ECO:0007669"/>
    <property type="project" value="Ensembl"/>
</dbReference>
<dbReference type="GO" id="GO:0020037">
    <property type="term" value="F:heme binding"/>
    <property type="evidence" value="ECO:0007669"/>
    <property type="project" value="InterPro"/>
</dbReference>
<dbReference type="GO" id="GO:0046872">
    <property type="term" value="F:metal ion binding"/>
    <property type="evidence" value="ECO:0007669"/>
    <property type="project" value="UniProtKB-KW"/>
</dbReference>
<dbReference type="GO" id="GO:0046982">
    <property type="term" value="F:protein heterodimerization activity"/>
    <property type="evidence" value="ECO:0007669"/>
    <property type="project" value="Ensembl"/>
</dbReference>
<dbReference type="GO" id="GO:0017124">
    <property type="term" value="F:SH3 domain binding"/>
    <property type="evidence" value="ECO:0007669"/>
    <property type="project" value="Ensembl"/>
</dbReference>
<dbReference type="GO" id="GO:0016175">
    <property type="term" value="F:superoxide-generating NAD(P)H oxidase activity"/>
    <property type="evidence" value="ECO:0007669"/>
    <property type="project" value="Ensembl"/>
</dbReference>
<dbReference type="GO" id="GO:0017004">
    <property type="term" value="P:cytochrome complex assembly"/>
    <property type="evidence" value="ECO:0007669"/>
    <property type="project" value="Ensembl"/>
</dbReference>
<dbReference type="GO" id="GO:0051649">
    <property type="term" value="P:establishment of localization in cell"/>
    <property type="evidence" value="ECO:0007669"/>
    <property type="project" value="Ensembl"/>
</dbReference>
<dbReference type="GO" id="GO:0006954">
    <property type="term" value="P:inflammatory response"/>
    <property type="evidence" value="ECO:0007669"/>
    <property type="project" value="Ensembl"/>
</dbReference>
<dbReference type="GO" id="GO:0045087">
    <property type="term" value="P:innate immune response"/>
    <property type="evidence" value="ECO:0000250"/>
    <property type="project" value="UniProtKB"/>
</dbReference>
<dbReference type="GO" id="GO:0070254">
    <property type="term" value="P:mucus secretion"/>
    <property type="evidence" value="ECO:0007669"/>
    <property type="project" value="Ensembl"/>
</dbReference>
<dbReference type="GO" id="GO:1900426">
    <property type="term" value="P:positive regulation of defense response to bacterium"/>
    <property type="evidence" value="ECO:0007669"/>
    <property type="project" value="Ensembl"/>
</dbReference>
<dbReference type="GO" id="GO:0032755">
    <property type="term" value="P:positive regulation of interleukin-6 production"/>
    <property type="evidence" value="ECO:0007669"/>
    <property type="project" value="Ensembl"/>
</dbReference>
<dbReference type="GO" id="GO:0070257">
    <property type="term" value="P:positive regulation of mucus secretion"/>
    <property type="evidence" value="ECO:0007669"/>
    <property type="project" value="Ensembl"/>
</dbReference>
<dbReference type="GO" id="GO:0050766">
    <property type="term" value="P:positive regulation of phagocytosis"/>
    <property type="evidence" value="ECO:0007669"/>
    <property type="project" value="Ensembl"/>
</dbReference>
<dbReference type="GO" id="GO:1903428">
    <property type="term" value="P:positive regulation of reactive oxygen species biosynthetic process"/>
    <property type="evidence" value="ECO:0007669"/>
    <property type="project" value="Ensembl"/>
</dbReference>
<dbReference type="GO" id="GO:0034137">
    <property type="term" value="P:positive regulation of toll-like receptor 2 signaling pathway"/>
    <property type="evidence" value="ECO:0007669"/>
    <property type="project" value="Ensembl"/>
</dbReference>
<dbReference type="GO" id="GO:0032760">
    <property type="term" value="P:positive regulation of tumor necrosis factor production"/>
    <property type="evidence" value="ECO:0007669"/>
    <property type="project" value="Ensembl"/>
</dbReference>
<dbReference type="GO" id="GO:0051279">
    <property type="term" value="P:regulation of release of sequestered calcium ion into cytosol"/>
    <property type="evidence" value="ECO:0007669"/>
    <property type="project" value="Ensembl"/>
</dbReference>
<dbReference type="GO" id="GO:0045730">
    <property type="term" value="P:respiratory burst"/>
    <property type="evidence" value="ECO:0007669"/>
    <property type="project" value="Ensembl"/>
</dbReference>
<dbReference type="GO" id="GO:0042554">
    <property type="term" value="P:superoxide anion generation"/>
    <property type="evidence" value="ECO:0007669"/>
    <property type="project" value="Ensembl"/>
</dbReference>
<dbReference type="InterPro" id="IPR007732">
    <property type="entry name" value="Cyt_b558_asu"/>
</dbReference>
<dbReference type="PANTHER" id="PTHR15168">
    <property type="entry name" value="CYTOCHROME B-245 LIGHT CHAIN"/>
    <property type="match status" value="1"/>
</dbReference>
<dbReference type="PANTHER" id="PTHR15168:SF0">
    <property type="entry name" value="CYTOCHROME B-245 LIGHT CHAIN"/>
    <property type="match status" value="1"/>
</dbReference>
<dbReference type="Pfam" id="PF05038">
    <property type="entry name" value="Cytochrom_B558a"/>
    <property type="match status" value="1"/>
</dbReference>
<dbReference type="PIRSF" id="PIRSF019635">
    <property type="entry name" value="Cytochr_b558a"/>
    <property type="match status" value="1"/>
</dbReference>
<reference key="1">
    <citation type="submission" date="1999-10" db="EMBL/GenBank/DDBJ databases">
        <title>Molecular cloning and identification of bottle-nosed dolphin flavocytochrome b558.</title>
        <authorList>
            <person name="Inoue Y."/>
            <person name="Ito T."/>
            <person name="Sakai T."/>
        </authorList>
    </citation>
    <scope>NUCLEOTIDE SEQUENCE [MRNA]</scope>
</reference>
<evidence type="ECO:0000250" key="1">
    <source>
        <dbReference type="UniProtKB" id="P13498"/>
    </source>
</evidence>
<evidence type="ECO:0000250" key="2">
    <source>
        <dbReference type="UniProtKB" id="Q61462"/>
    </source>
</evidence>
<evidence type="ECO:0000256" key="3">
    <source>
        <dbReference type="SAM" id="MobiDB-lite"/>
    </source>
</evidence>
<evidence type="ECO:0000305" key="4"/>